<reference evidence="7" key="1">
    <citation type="journal article" date="2014" name="Zool. Sci.">
        <title>Peptidomic analysis of antimicrobial peptides in skin secretions of Amolops mantzorum.</title>
        <authorList>
            <person name="Hu Y."/>
            <person name="Yu Z."/>
            <person name="Xu S."/>
            <person name="Hu Y."/>
            <person name="Guo C."/>
            <person name="Li F."/>
            <person name="Li J."/>
            <person name="Liu J."/>
            <person name="Wang H."/>
        </authorList>
    </citation>
    <scope>NUCLEOTIDE SEQUENCE [MRNA]</scope>
    <scope>PROTEIN SEQUENCE OF 47-59</scope>
    <scope>SUBCELLULAR LOCATION</scope>
    <scope>IDENTIFICATION BY MASS SPECTROMETRY</scope>
    <scope>AMIDATION AT LEU-59</scope>
    <source>
        <tissue evidence="4">Skin</tissue>
        <tissue evidence="4">Skin secretion</tissue>
    </source>
</reference>
<accession>E1B248</accession>
<evidence type="ECO:0000250" key="1">
    <source>
        <dbReference type="UniProtKB" id="P82848"/>
    </source>
</evidence>
<evidence type="ECO:0000255" key="2"/>
<evidence type="ECO:0000269" key="3">
    <source>
    </source>
</evidence>
<evidence type="ECO:0000303" key="4">
    <source>
    </source>
</evidence>
<evidence type="ECO:0000305" key="5"/>
<evidence type="ECO:0000305" key="6">
    <source>
    </source>
</evidence>
<evidence type="ECO:0000312" key="7">
    <source>
        <dbReference type="EMBL" id="ADM34281.1"/>
    </source>
</evidence>
<keyword id="KW-0027">Amidation</keyword>
<keyword id="KW-0878">Amphibian defense peptide</keyword>
<keyword id="KW-0929">Antimicrobial</keyword>
<keyword id="KW-0165">Cleavage on pair of basic residues</keyword>
<keyword id="KW-0903">Direct protein sequencing</keyword>
<keyword id="KW-0964">Secreted</keyword>
<keyword id="KW-0732">Signal</keyword>
<protein>
    <recommendedName>
        <fullName evidence="4">Temporin-MT3</fullName>
    </recommendedName>
</protein>
<name>TP3_AMOMA</name>
<organism evidence="7">
    <name type="scientific">Amolops mantzorum</name>
    <name type="common">Sichuan torrent frog</name>
    <dbReference type="NCBI Taxonomy" id="167930"/>
    <lineage>
        <taxon>Eukaryota</taxon>
        <taxon>Metazoa</taxon>
        <taxon>Chordata</taxon>
        <taxon>Craniata</taxon>
        <taxon>Vertebrata</taxon>
        <taxon>Euteleostomi</taxon>
        <taxon>Amphibia</taxon>
        <taxon>Batrachia</taxon>
        <taxon>Anura</taxon>
        <taxon>Neobatrachia</taxon>
        <taxon>Ranoidea</taxon>
        <taxon>Ranidae</taxon>
        <taxon>Amolops</taxon>
    </lineage>
</organism>
<sequence length="61" mass="7059">MFTLKKPLLLLFFLGTINLSLCEQERNAEEERRDEPDERNAEVEKRFLPIVGKLLSGLLGK</sequence>
<proteinExistence type="evidence at protein level"/>
<dbReference type="EMBL" id="HQ128623">
    <property type="protein sequence ID" value="ADM34281.1"/>
    <property type="molecule type" value="mRNA"/>
</dbReference>
<dbReference type="GO" id="GO:0005576">
    <property type="term" value="C:extracellular region"/>
    <property type="evidence" value="ECO:0007669"/>
    <property type="project" value="UniProtKB-SubCell"/>
</dbReference>
<dbReference type="GO" id="GO:0006952">
    <property type="term" value="P:defense response"/>
    <property type="evidence" value="ECO:0007669"/>
    <property type="project" value="UniProtKB-KW"/>
</dbReference>
<dbReference type="InterPro" id="IPR004275">
    <property type="entry name" value="Frog_antimicrobial_propeptide"/>
</dbReference>
<dbReference type="Pfam" id="PF03032">
    <property type="entry name" value="FSAP_sig_propep"/>
    <property type="match status" value="1"/>
</dbReference>
<feature type="signal peptide" evidence="2">
    <location>
        <begin position="1"/>
        <end position="22"/>
    </location>
</feature>
<feature type="propeptide" id="PRO_0000440088" description="Removed in mature form" evidence="6">
    <location>
        <begin position="23"/>
        <end position="44"/>
    </location>
</feature>
<feature type="peptide" id="PRO_0000440089" description="Temporin-MT3" evidence="3">
    <location>
        <begin position="47"/>
        <end position="59"/>
    </location>
</feature>
<feature type="modified residue" description="Leucine amide" evidence="3">
    <location>
        <position position="59"/>
    </location>
</feature>
<comment type="function">
    <text evidence="1">Antimicrobial peptide.</text>
</comment>
<comment type="subcellular location">
    <subcellularLocation>
        <location evidence="2 3">Secreted</location>
    </subcellularLocation>
</comment>
<comment type="tissue specificity">
    <text evidence="6">Expressed by the skin glands.</text>
</comment>
<comment type="similarity">
    <text evidence="5">Belongs to the frog skin active peptide (FSAP) family. Temporin subfamily.</text>
</comment>